<feature type="chain" id="PRO_1000080629" description="Ketol-acid reductoisomerase (NADP(+))">
    <location>
        <begin position="1"/>
        <end position="338"/>
    </location>
</feature>
<feature type="domain" description="KARI N-terminal Rossmann" evidence="2">
    <location>
        <begin position="1"/>
        <end position="181"/>
    </location>
</feature>
<feature type="domain" description="KARI C-terminal knotted" evidence="3">
    <location>
        <begin position="182"/>
        <end position="327"/>
    </location>
</feature>
<feature type="active site" evidence="1">
    <location>
        <position position="107"/>
    </location>
</feature>
<feature type="binding site" evidence="1">
    <location>
        <begin position="24"/>
        <end position="27"/>
    </location>
    <ligand>
        <name>NADP(+)</name>
        <dbReference type="ChEBI" id="CHEBI:58349"/>
    </ligand>
</feature>
<feature type="binding site" evidence="1">
    <location>
        <position position="47"/>
    </location>
    <ligand>
        <name>NADP(+)</name>
        <dbReference type="ChEBI" id="CHEBI:58349"/>
    </ligand>
</feature>
<feature type="binding site" evidence="1">
    <location>
        <position position="50"/>
    </location>
    <ligand>
        <name>NADP(+)</name>
        <dbReference type="ChEBI" id="CHEBI:58349"/>
    </ligand>
</feature>
<feature type="binding site" evidence="1">
    <location>
        <position position="52"/>
    </location>
    <ligand>
        <name>NADP(+)</name>
        <dbReference type="ChEBI" id="CHEBI:58349"/>
    </ligand>
</feature>
<feature type="binding site" evidence="1">
    <location>
        <begin position="82"/>
        <end position="85"/>
    </location>
    <ligand>
        <name>NADP(+)</name>
        <dbReference type="ChEBI" id="CHEBI:58349"/>
    </ligand>
</feature>
<feature type="binding site" evidence="1">
    <location>
        <position position="133"/>
    </location>
    <ligand>
        <name>NADP(+)</name>
        <dbReference type="ChEBI" id="CHEBI:58349"/>
    </ligand>
</feature>
<feature type="binding site" evidence="1">
    <location>
        <position position="190"/>
    </location>
    <ligand>
        <name>Mg(2+)</name>
        <dbReference type="ChEBI" id="CHEBI:18420"/>
        <label>1</label>
    </ligand>
</feature>
<feature type="binding site" evidence="1">
    <location>
        <position position="190"/>
    </location>
    <ligand>
        <name>Mg(2+)</name>
        <dbReference type="ChEBI" id="CHEBI:18420"/>
        <label>2</label>
    </ligand>
</feature>
<feature type="binding site" evidence="1">
    <location>
        <position position="194"/>
    </location>
    <ligand>
        <name>Mg(2+)</name>
        <dbReference type="ChEBI" id="CHEBI:18420"/>
        <label>1</label>
    </ligand>
</feature>
<feature type="binding site" evidence="1">
    <location>
        <position position="226"/>
    </location>
    <ligand>
        <name>Mg(2+)</name>
        <dbReference type="ChEBI" id="CHEBI:18420"/>
        <label>2</label>
    </ligand>
</feature>
<feature type="binding site" evidence="1">
    <location>
        <position position="230"/>
    </location>
    <ligand>
        <name>Mg(2+)</name>
        <dbReference type="ChEBI" id="CHEBI:18420"/>
        <label>2</label>
    </ligand>
</feature>
<feature type="binding site" evidence="1">
    <location>
        <position position="251"/>
    </location>
    <ligand>
        <name>substrate</name>
    </ligand>
</feature>
<name>ILVC_GEOUR</name>
<evidence type="ECO:0000255" key="1">
    <source>
        <dbReference type="HAMAP-Rule" id="MF_00435"/>
    </source>
</evidence>
<evidence type="ECO:0000255" key="2">
    <source>
        <dbReference type="PROSITE-ProRule" id="PRU01197"/>
    </source>
</evidence>
<evidence type="ECO:0000255" key="3">
    <source>
        <dbReference type="PROSITE-ProRule" id="PRU01198"/>
    </source>
</evidence>
<reference key="1">
    <citation type="submission" date="2007-05" db="EMBL/GenBank/DDBJ databases">
        <title>Complete sequence of Geobacter uraniireducens Rf4.</title>
        <authorList>
            <consortium name="US DOE Joint Genome Institute"/>
            <person name="Copeland A."/>
            <person name="Lucas S."/>
            <person name="Lapidus A."/>
            <person name="Barry K."/>
            <person name="Detter J.C."/>
            <person name="Glavina del Rio T."/>
            <person name="Hammon N."/>
            <person name="Israni S."/>
            <person name="Dalin E."/>
            <person name="Tice H."/>
            <person name="Pitluck S."/>
            <person name="Chertkov O."/>
            <person name="Brettin T."/>
            <person name="Bruce D."/>
            <person name="Han C."/>
            <person name="Schmutz J."/>
            <person name="Larimer F."/>
            <person name="Land M."/>
            <person name="Hauser L."/>
            <person name="Kyrpides N."/>
            <person name="Mikhailova N."/>
            <person name="Shelobolina E."/>
            <person name="Aklujkar M."/>
            <person name="Lovley D."/>
            <person name="Richardson P."/>
        </authorList>
    </citation>
    <scope>NUCLEOTIDE SEQUENCE [LARGE SCALE GENOMIC DNA]</scope>
    <source>
        <strain>ATCC BAA-1134 / JCM 13001 / Rf4</strain>
    </source>
</reference>
<sequence>MKIYYDKDCNLSLLKGKKVAIIGYGSQGHAHANNLKDSGIDVVVGLKADSASVKKATEAGLTVLTTSEAVKIADIIMILLPDEIQGDVYREEIAPYVKQGAYLAFGHGFNIHFGQIVPRHDINVIMVAPKGPGHLVRHEYTKGGGVPSLIAIHHDPSGNSRDVALAYASANGGGKAGIIETSFKEETETDLFGEQAVLCGGISALIQAGFETLVEAGYAPEMAYFECLHETKLIVDLIYEGGIANMRYSVSNTAEYGDLTRGPRVITGETKKEMKKILTEIQEGEFAREWMLENKVNNPRFNALRRKGTEHQIEEVGARLRSMMAWIGKSKIVDKTKN</sequence>
<organism>
    <name type="scientific">Geotalea uraniireducens (strain Rf4)</name>
    <name type="common">Geobacter uraniireducens</name>
    <dbReference type="NCBI Taxonomy" id="351605"/>
    <lineage>
        <taxon>Bacteria</taxon>
        <taxon>Pseudomonadati</taxon>
        <taxon>Thermodesulfobacteriota</taxon>
        <taxon>Desulfuromonadia</taxon>
        <taxon>Geobacterales</taxon>
        <taxon>Geobacteraceae</taxon>
        <taxon>Geotalea</taxon>
    </lineage>
</organism>
<accession>A5G7V3</accession>
<dbReference type="EC" id="1.1.1.86" evidence="1"/>
<dbReference type="EMBL" id="CP000698">
    <property type="protein sequence ID" value="ABQ27871.1"/>
    <property type="molecule type" value="Genomic_DNA"/>
</dbReference>
<dbReference type="SMR" id="A5G7V3"/>
<dbReference type="STRING" id="351605.Gura_3718"/>
<dbReference type="KEGG" id="gur:Gura_3718"/>
<dbReference type="HOGENOM" id="CLU_033821_0_1_7"/>
<dbReference type="OrthoDB" id="9804088at2"/>
<dbReference type="UniPathway" id="UPA00047">
    <property type="reaction ID" value="UER00056"/>
</dbReference>
<dbReference type="UniPathway" id="UPA00049">
    <property type="reaction ID" value="UER00060"/>
</dbReference>
<dbReference type="Proteomes" id="UP000006695">
    <property type="component" value="Chromosome"/>
</dbReference>
<dbReference type="GO" id="GO:0005829">
    <property type="term" value="C:cytosol"/>
    <property type="evidence" value="ECO:0007669"/>
    <property type="project" value="TreeGrafter"/>
</dbReference>
<dbReference type="GO" id="GO:0004455">
    <property type="term" value="F:ketol-acid reductoisomerase activity"/>
    <property type="evidence" value="ECO:0007669"/>
    <property type="project" value="UniProtKB-UniRule"/>
</dbReference>
<dbReference type="GO" id="GO:0000287">
    <property type="term" value="F:magnesium ion binding"/>
    <property type="evidence" value="ECO:0007669"/>
    <property type="project" value="UniProtKB-UniRule"/>
</dbReference>
<dbReference type="GO" id="GO:0050661">
    <property type="term" value="F:NADP binding"/>
    <property type="evidence" value="ECO:0007669"/>
    <property type="project" value="InterPro"/>
</dbReference>
<dbReference type="GO" id="GO:0009097">
    <property type="term" value="P:isoleucine biosynthetic process"/>
    <property type="evidence" value="ECO:0007669"/>
    <property type="project" value="UniProtKB-UniRule"/>
</dbReference>
<dbReference type="GO" id="GO:0009099">
    <property type="term" value="P:L-valine biosynthetic process"/>
    <property type="evidence" value="ECO:0007669"/>
    <property type="project" value="UniProtKB-UniRule"/>
</dbReference>
<dbReference type="FunFam" id="3.40.50.720:FF:000023">
    <property type="entry name" value="Ketol-acid reductoisomerase (NADP(+))"/>
    <property type="match status" value="1"/>
</dbReference>
<dbReference type="Gene3D" id="6.10.240.10">
    <property type="match status" value="1"/>
</dbReference>
<dbReference type="Gene3D" id="3.40.50.720">
    <property type="entry name" value="NAD(P)-binding Rossmann-like Domain"/>
    <property type="match status" value="1"/>
</dbReference>
<dbReference type="HAMAP" id="MF_00435">
    <property type="entry name" value="IlvC"/>
    <property type="match status" value="1"/>
</dbReference>
<dbReference type="InterPro" id="IPR008927">
    <property type="entry name" value="6-PGluconate_DH-like_C_sf"/>
</dbReference>
<dbReference type="InterPro" id="IPR013023">
    <property type="entry name" value="KARI"/>
</dbReference>
<dbReference type="InterPro" id="IPR000506">
    <property type="entry name" value="KARI_C"/>
</dbReference>
<dbReference type="InterPro" id="IPR013116">
    <property type="entry name" value="KARI_N"/>
</dbReference>
<dbReference type="InterPro" id="IPR014359">
    <property type="entry name" value="KARI_prok"/>
</dbReference>
<dbReference type="InterPro" id="IPR036291">
    <property type="entry name" value="NAD(P)-bd_dom_sf"/>
</dbReference>
<dbReference type="NCBIfam" id="TIGR00465">
    <property type="entry name" value="ilvC"/>
    <property type="match status" value="1"/>
</dbReference>
<dbReference type="NCBIfam" id="NF004017">
    <property type="entry name" value="PRK05479.1"/>
    <property type="match status" value="1"/>
</dbReference>
<dbReference type="NCBIfam" id="NF009940">
    <property type="entry name" value="PRK13403.1"/>
    <property type="match status" value="1"/>
</dbReference>
<dbReference type="PANTHER" id="PTHR21371">
    <property type="entry name" value="KETOL-ACID REDUCTOISOMERASE, MITOCHONDRIAL"/>
    <property type="match status" value="1"/>
</dbReference>
<dbReference type="PANTHER" id="PTHR21371:SF1">
    <property type="entry name" value="KETOL-ACID REDUCTOISOMERASE, MITOCHONDRIAL"/>
    <property type="match status" value="1"/>
</dbReference>
<dbReference type="Pfam" id="PF01450">
    <property type="entry name" value="KARI_C"/>
    <property type="match status" value="1"/>
</dbReference>
<dbReference type="Pfam" id="PF07991">
    <property type="entry name" value="KARI_N"/>
    <property type="match status" value="1"/>
</dbReference>
<dbReference type="PIRSF" id="PIRSF000116">
    <property type="entry name" value="IlvC_gammaproteo"/>
    <property type="match status" value="1"/>
</dbReference>
<dbReference type="SUPFAM" id="SSF48179">
    <property type="entry name" value="6-phosphogluconate dehydrogenase C-terminal domain-like"/>
    <property type="match status" value="1"/>
</dbReference>
<dbReference type="SUPFAM" id="SSF51735">
    <property type="entry name" value="NAD(P)-binding Rossmann-fold domains"/>
    <property type="match status" value="1"/>
</dbReference>
<dbReference type="PROSITE" id="PS51851">
    <property type="entry name" value="KARI_C"/>
    <property type="match status" value="1"/>
</dbReference>
<dbReference type="PROSITE" id="PS51850">
    <property type="entry name" value="KARI_N"/>
    <property type="match status" value="1"/>
</dbReference>
<keyword id="KW-0028">Amino-acid biosynthesis</keyword>
<keyword id="KW-0100">Branched-chain amino acid biosynthesis</keyword>
<keyword id="KW-0460">Magnesium</keyword>
<keyword id="KW-0479">Metal-binding</keyword>
<keyword id="KW-0521">NADP</keyword>
<keyword id="KW-0560">Oxidoreductase</keyword>
<keyword id="KW-1185">Reference proteome</keyword>
<proteinExistence type="inferred from homology"/>
<gene>
    <name evidence="1" type="primary">ilvC</name>
    <name type="ordered locus">Gura_3718</name>
</gene>
<comment type="function">
    <text evidence="1">Involved in the biosynthesis of branched-chain amino acids (BCAA). Catalyzes an alkyl-migration followed by a ketol-acid reduction of (S)-2-acetolactate (S2AL) to yield (R)-2,3-dihydroxy-isovalerate. In the isomerase reaction, S2AL is rearranged via a Mg-dependent methyl migration to produce 3-hydroxy-3-methyl-2-ketobutyrate (HMKB). In the reductase reaction, this 2-ketoacid undergoes a metal-dependent reduction by NADPH to yield (R)-2,3-dihydroxy-isovalerate.</text>
</comment>
<comment type="catalytic activity">
    <reaction evidence="1">
        <text>(2R)-2,3-dihydroxy-3-methylbutanoate + NADP(+) = (2S)-2-acetolactate + NADPH + H(+)</text>
        <dbReference type="Rhea" id="RHEA:22068"/>
        <dbReference type="ChEBI" id="CHEBI:15378"/>
        <dbReference type="ChEBI" id="CHEBI:49072"/>
        <dbReference type="ChEBI" id="CHEBI:57783"/>
        <dbReference type="ChEBI" id="CHEBI:58349"/>
        <dbReference type="ChEBI" id="CHEBI:58476"/>
        <dbReference type="EC" id="1.1.1.86"/>
    </reaction>
</comment>
<comment type="catalytic activity">
    <reaction evidence="1">
        <text>(2R,3R)-2,3-dihydroxy-3-methylpentanoate + NADP(+) = (S)-2-ethyl-2-hydroxy-3-oxobutanoate + NADPH + H(+)</text>
        <dbReference type="Rhea" id="RHEA:13493"/>
        <dbReference type="ChEBI" id="CHEBI:15378"/>
        <dbReference type="ChEBI" id="CHEBI:49256"/>
        <dbReference type="ChEBI" id="CHEBI:49258"/>
        <dbReference type="ChEBI" id="CHEBI:57783"/>
        <dbReference type="ChEBI" id="CHEBI:58349"/>
        <dbReference type="EC" id="1.1.1.86"/>
    </reaction>
</comment>
<comment type="cofactor">
    <cofactor evidence="1">
        <name>Mg(2+)</name>
        <dbReference type="ChEBI" id="CHEBI:18420"/>
    </cofactor>
    <text evidence="1">Binds 2 magnesium ions per subunit.</text>
</comment>
<comment type="pathway">
    <text evidence="1">Amino-acid biosynthesis; L-isoleucine biosynthesis; L-isoleucine from 2-oxobutanoate: step 2/4.</text>
</comment>
<comment type="pathway">
    <text evidence="1">Amino-acid biosynthesis; L-valine biosynthesis; L-valine from pyruvate: step 2/4.</text>
</comment>
<comment type="similarity">
    <text evidence="1">Belongs to the ketol-acid reductoisomerase family.</text>
</comment>
<protein>
    <recommendedName>
        <fullName evidence="1">Ketol-acid reductoisomerase (NADP(+))</fullName>
        <shortName evidence="1">KARI</shortName>
        <ecNumber evidence="1">1.1.1.86</ecNumber>
    </recommendedName>
    <alternativeName>
        <fullName evidence="1">Acetohydroxy-acid isomeroreductase</fullName>
        <shortName evidence="1">AHIR</shortName>
    </alternativeName>
    <alternativeName>
        <fullName evidence="1">Alpha-keto-beta-hydroxylacyl reductoisomerase</fullName>
    </alternativeName>
    <alternativeName>
        <fullName evidence="1">Ketol-acid reductoisomerase type 1</fullName>
    </alternativeName>
    <alternativeName>
        <fullName evidence="1">Ketol-acid reductoisomerase type I</fullName>
    </alternativeName>
</protein>